<protein>
    <recommendedName>
        <fullName evidence="30">Autophagy-related protein 18</fullName>
    </recommendedName>
    <alternativeName>
        <fullName evidence="29">Cytoplasm to vacuole targeting protein 18</fullName>
    </alternativeName>
    <alternativeName>
        <fullName evidence="27">Needed for premeiotic replication protein 1</fullName>
    </alternativeName>
    <alternativeName>
        <fullName evidence="31">Swollen vacuole phenotype protein 1</fullName>
    </alternativeName>
</protein>
<feature type="chain" id="PRO_0000050874" description="Autophagy-related protein 18">
    <location>
        <begin position="1"/>
        <end position="500"/>
    </location>
</feature>
<feature type="repeat" description="WD 1" evidence="1">
    <location>
        <begin position="243"/>
        <end position="283"/>
    </location>
</feature>
<feature type="repeat" description="WD 2" evidence="1">
    <location>
        <begin position="288"/>
        <end position="327"/>
    </location>
</feature>
<feature type="region of interest" description="Disordered" evidence="2">
    <location>
        <begin position="174"/>
        <end position="197"/>
    </location>
</feature>
<feature type="region of interest" description="Disordered" evidence="2">
    <location>
        <begin position="328"/>
        <end position="358"/>
    </location>
</feature>
<feature type="short sequence motif" description="L/FRRG motif" evidence="32">
    <location>
        <begin position="284"/>
        <end position="288"/>
    </location>
</feature>
<feature type="compositionally biased region" description="Basic and acidic residues" evidence="2">
    <location>
        <begin position="181"/>
        <end position="194"/>
    </location>
</feature>
<feature type="compositionally biased region" description="Acidic residues" evidence="2">
    <location>
        <begin position="331"/>
        <end position="344"/>
    </location>
</feature>
<feature type="modified residue" description="Phosphoserine" evidence="36">
    <location>
        <position position="354"/>
    </location>
</feature>
<feature type="mutagenesis site" description="Leads to a slight reduction of PIP2 binding." evidence="9">
    <original>RRLR</original>
    <variation>SSLS</variation>
    <location>
        <begin position="73"/>
        <end position="76"/>
    </location>
</feature>
<feature type="mutagenesis site" description="Impairs membrane-association." evidence="22">
    <original>S</original>
    <variation>A</variation>
    <location>
        <position position="264"/>
    </location>
</feature>
<feature type="mutagenesis site" description="Impairs membrane-association." evidence="22">
    <original>T</original>
    <variation>A</variation>
    <location>
        <position position="268"/>
    </location>
</feature>
<feature type="mutagenesis site" description="Impairs membrane-association." evidence="22">
    <original>R</original>
    <variation>A</variation>
    <location>
        <position position="271"/>
    </location>
</feature>
<feature type="mutagenesis site" description="Loss of recruitment to vacuole membrane." evidence="22">
    <original>RR</original>
    <variation>GG</variation>
    <location>
        <begin position="285"/>
        <end position="286"/>
    </location>
</feature>
<feature type="mutagenesis site" description="Leads to a 40-fold decrease of affinity to PIP2." evidence="9 22">
    <original>RR</original>
    <variation>TT</variation>
    <location>
        <begin position="285"/>
        <end position="286"/>
    </location>
</feature>
<feature type="mutagenesis site" description="Impairs membrane-association." evidence="22">
    <original>R</original>
    <variation>A</variation>
    <location>
        <position position="285"/>
    </location>
</feature>
<feature type="mutagenesis site" description="Impairs membrane-association." evidence="22">
    <original>R</original>
    <variation>A</variation>
    <location>
        <position position="286"/>
    </location>
</feature>
<feature type="mutagenesis site" description="Impairs membrane-association." evidence="22">
    <original>S</original>
    <variation>A</variation>
    <location>
        <position position="311"/>
    </location>
</feature>
<feature type="mutagenesis site" description="Impairs membrane-association." evidence="22">
    <original>T</original>
    <variation>A</variation>
    <location>
        <position position="313"/>
    </location>
</feature>
<feature type="mutagenesis site" description="Impairs membrane-association." evidence="22">
    <original>H</original>
    <variation>A</variation>
    <location>
        <position position="315"/>
    </location>
</feature>
<feature type="strand" evidence="37">
    <location>
        <begin position="8"/>
        <end position="13"/>
    </location>
</feature>
<feature type="strand" evidence="37">
    <location>
        <begin position="17"/>
        <end position="26"/>
    </location>
</feature>
<feature type="strand" evidence="37">
    <location>
        <begin position="28"/>
        <end position="32"/>
    </location>
</feature>
<feature type="turn" evidence="37">
    <location>
        <begin position="33"/>
        <end position="36"/>
    </location>
</feature>
<feature type="strand" evidence="37">
    <location>
        <begin position="37"/>
        <end position="42"/>
    </location>
</feature>
<feature type="strand" evidence="37">
    <location>
        <begin position="47"/>
        <end position="52"/>
    </location>
</feature>
<feature type="strand" evidence="37">
    <location>
        <begin position="54"/>
        <end position="63"/>
    </location>
</feature>
<feature type="strand" evidence="37">
    <location>
        <begin position="65"/>
        <end position="67"/>
    </location>
</feature>
<feature type="strand" evidence="37">
    <location>
        <begin position="74"/>
        <end position="79"/>
    </location>
</feature>
<feature type="turn" evidence="37">
    <location>
        <begin position="80"/>
        <end position="83"/>
    </location>
</feature>
<feature type="strand" evidence="37">
    <location>
        <begin position="84"/>
        <end position="90"/>
    </location>
</feature>
<feature type="strand" evidence="37">
    <location>
        <begin position="97"/>
        <end position="100"/>
    </location>
</feature>
<feature type="strand" evidence="37">
    <location>
        <begin position="102"/>
        <end position="109"/>
    </location>
</feature>
<feature type="strand" evidence="37">
    <location>
        <begin position="112"/>
        <end position="117"/>
    </location>
</feature>
<feature type="turn" evidence="37">
    <location>
        <begin position="118"/>
        <end position="120"/>
    </location>
</feature>
<feature type="strand" evidence="37">
    <location>
        <begin position="123"/>
        <end position="128"/>
    </location>
</feature>
<feature type="strand" evidence="37">
    <location>
        <begin position="147"/>
        <end position="151"/>
    </location>
</feature>
<feature type="strand" evidence="37">
    <location>
        <begin position="225"/>
        <end position="231"/>
    </location>
</feature>
<feature type="turn" evidence="37">
    <location>
        <begin position="232"/>
        <end position="235"/>
    </location>
</feature>
<feature type="strand" evidence="37">
    <location>
        <begin position="236"/>
        <end position="246"/>
    </location>
</feature>
<feature type="strand" evidence="37">
    <location>
        <begin position="248"/>
        <end position="253"/>
    </location>
</feature>
<feature type="strand" evidence="37">
    <location>
        <begin position="259"/>
        <end position="264"/>
    </location>
</feature>
<feature type="strand" evidence="37">
    <location>
        <begin position="268"/>
        <end position="274"/>
    </location>
</feature>
<feature type="turn" evidence="37">
    <location>
        <begin position="275"/>
        <end position="277"/>
    </location>
</feature>
<feature type="strand" evidence="37">
    <location>
        <begin position="280"/>
        <end position="285"/>
    </location>
</feature>
<feature type="strand" evidence="38">
    <location>
        <begin position="287"/>
        <end position="290"/>
    </location>
</feature>
<feature type="strand" evidence="37">
    <location>
        <begin position="293"/>
        <end position="298"/>
    </location>
</feature>
<feature type="strand" evidence="37">
    <location>
        <begin position="302"/>
        <end position="309"/>
    </location>
</feature>
<feature type="strand" evidence="37">
    <location>
        <begin position="312"/>
        <end position="318"/>
    </location>
</feature>
<feature type="strand" evidence="37">
    <location>
        <begin position="412"/>
        <end position="416"/>
    </location>
</feature>
<feature type="strand" evidence="37">
    <location>
        <begin position="427"/>
        <end position="431"/>
    </location>
</feature>
<feature type="strand" evidence="37">
    <location>
        <begin position="437"/>
        <end position="439"/>
    </location>
</feature>
<feature type="strand" evidence="37">
    <location>
        <begin position="465"/>
        <end position="471"/>
    </location>
</feature>
<feature type="strand" evidence="37">
    <location>
        <begin position="474"/>
        <end position="481"/>
    </location>
</feature>
<feature type="turn" evidence="37">
    <location>
        <begin position="483"/>
        <end position="485"/>
    </location>
</feature>
<feature type="strand" evidence="37">
    <location>
        <begin position="490"/>
        <end position="497"/>
    </location>
</feature>
<evidence type="ECO:0000255" key="1"/>
<evidence type="ECO:0000256" key="2">
    <source>
        <dbReference type="SAM" id="MobiDB-lite"/>
    </source>
</evidence>
<evidence type="ECO:0000269" key="3">
    <source>
    </source>
</evidence>
<evidence type="ECO:0000269" key="4">
    <source>
    </source>
</evidence>
<evidence type="ECO:0000269" key="5">
    <source>
    </source>
</evidence>
<evidence type="ECO:0000269" key="6">
    <source>
    </source>
</evidence>
<evidence type="ECO:0000269" key="7">
    <source>
    </source>
</evidence>
<evidence type="ECO:0000269" key="8">
    <source>
    </source>
</evidence>
<evidence type="ECO:0000269" key="9">
    <source>
    </source>
</evidence>
<evidence type="ECO:0000269" key="10">
    <source>
    </source>
</evidence>
<evidence type="ECO:0000269" key="11">
    <source>
    </source>
</evidence>
<evidence type="ECO:0000269" key="12">
    <source>
    </source>
</evidence>
<evidence type="ECO:0000269" key="13">
    <source>
    </source>
</evidence>
<evidence type="ECO:0000269" key="14">
    <source>
    </source>
</evidence>
<evidence type="ECO:0000269" key="15">
    <source>
    </source>
</evidence>
<evidence type="ECO:0000269" key="16">
    <source>
    </source>
</evidence>
<evidence type="ECO:0000269" key="17">
    <source>
    </source>
</evidence>
<evidence type="ECO:0000269" key="18">
    <source>
    </source>
</evidence>
<evidence type="ECO:0000269" key="19">
    <source>
    </source>
</evidence>
<evidence type="ECO:0000269" key="20">
    <source>
    </source>
</evidence>
<evidence type="ECO:0000269" key="21">
    <source>
    </source>
</evidence>
<evidence type="ECO:0000269" key="22">
    <source>
    </source>
</evidence>
<evidence type="ECO:0000269" key="23">
    <source>
    </source>
</evidence>
<evidence type="ECO:0000269" key="24">
    <source>
    </source>
</evidence>
<evidence type="ECO:0000269" key="25">
    <source>
    </source>
</evidence>
<evidence type="ECO:0000269" key="26">
    <source>
    </source>
</evidence>
<evidence type="ECO:0000303" key="27">
    <source>
    </source>
</evidence>
<evidence type="ECO:0000303" key="28">
    <source>
    </source>
</evidence>
<evidence type="ECO:0000303" key="29">
    <source>
    </source>
</evidence>
<evidence type="ECO:0000303" key="30">
    <source>
    </source>
</evidence>
<evidence type="ECO:0000303" key="31">
    <source>
    </source>
</evidence>
<evidence type="ECO:0000303" key="32">
    <source>
    </source>
</evidence>
<evidence type="ECO:0000305" key="33"/>
<evidence type="ECO:0000312" key="34">
    <source>
        <dbReference type="SGD" id="S000001917"/>
    </source>
</evidence>
<evidence type="ECO:0007744" key="35">
    <source>
        <dbReference type="PDB" id="6KYB"/>
    </source>
</evidence>
<evidence type="ECO:0007744" key="36">
    <source>
    </source>
</evidence>
<evidence type="ECO:0007829" key="37">
    <source>
        <dbReference type="PDB" id="6KYB"/>
    </source>
</evidence>
<evidence type="ECO:0007829" key="38">
    <source>
        <dbReference type="PDB" id="8AFQ"/>
    </source>
</evidence>
<accession>P43601</accession>
<accession>D6VTQ1</accession>
<comment type="function">
    <text evidence="3 4 5 6 8 10 11 12 13 15 16 17 18 19 20 21 23 25">Phosphoinositide binding protein that plays a key role in cytoplasm to vacuole transport (Cvt) vesicle formation, pexophagy and starvation-induced autophagy (PubMed:11470404, PubMed:11536337, PubMed:11707261, PubMed:11739783, PubMed:15155809, PubMed:15194695, PubMed:16876790, PubMed:18769150, PubMed:20154084). Component of the PI(3,5)P2 regulatory complex that regulates both the synthesis and turnover of phosphatidylinositol 3,5-bisphosphate (PtdIns(3,5)P2) (PubMed:18586673, PubMed:19037259). Involved in correct ATG9 trafficking to the pre-autophagosomal structure (PubMed:14723849, PubMed:18829864, PubMed:24905091). With ATG2, protects ATG8 from ATG4-mediated cleavage (PubMed:22108003, PubMed:22728243). May negatively regulate FAB1 activity by sequestering or masking VAC7 from FAB1 (PubMed:17699591). Plays an important role in osmotically-induced vacuole fragmentation (PubMed:22787281).</text>
</comment>
<comment type="subunit">
    <text evidence="8 9 10 13 15 17 18 21 24 25 26">Component of the PI(3,5)P2 regulatory complex, composed of ATG18, FIG4, FAB1, VAC14 and VAC7. VAC14 nucleates the assembly of the complex and serves as a scaffold (PubMed:18586673, PubMed:19037259). Interacts with ATG2, the ATG2-ATG18 complex being essential for autophagosome formation (PubMed:22728243, PubMed:32809042). Interacts with ATG9 (PubMed:14723849, PubMed:15103325, PubMed:15155809, PubMed:18829864, PubMed:24440502, PubMed:24905091). Also interacts with VAC17 (PubMed:17699591).</text>
</comment>
<comment type="interaction">
    <interactant intactId="EBI-22968">
        <id>P43601</id>
    </interactant>
    <interactant intactId="EBI-29212">
        <id>P53855</id>
        <label>ATG2</label>
    </interactant>
    <organismsDiffer>false</organismsDiffer>
    <experiments>6</experiments>
</comment>
<comment type="interaction">
    <interactant intactId="EBI-22968">
        <id>P43601</id>
    </interactant>
    <interactant intactId="EBI-27189">
        <id>Q06708</id>
        <label>VAC14</label>
    </interactant>
    <organismsDiffer>false</organismsDiffer>
    <experiments>5</experiments>
</comment>
<comment type="subcellular location">
    <subcellularLocation>
        <location evidence="8 12 14 15 17">Preautophagosomal structure membrane</location>
        <topology evidence="8 12 14 15 17">Peripheral membrane protein</topology>
    </subcellularLocation>
    <subcellularLocation>
        <location evidence="9 10 12 13 14 18">Vacuole membrane</location>
        <topology evidence="9 10 12 13 14 18">Peripheral membrane protein</topology>
    </subcellularLocation>
    <subcellularLocation>
        <location evidence="16">Endosome membrane</location>
        <topology evidence="16">Peripheral membrane protein</topology>
    </subcellularLocation>
    <text evidence="13">Requires VAC7 for vacuole membrane localization. Under mid-log phase growth, localizes to the vacuolar membrane; but when cells are starved, is almost completely released from the vacuole membrane.</text>
</comment>
<comment type="domain">
    <text evidence="22">The 377 first amino acids might form a beta-propeller domain involved in specific binding to phosphatidylinositol 3,5-bisphosphate (PIP2), leading to the association of the protein to the membrane. Association to the membrane can also occur through binding to phosphatidylinositol 3-monophosphate (PI3P).</text>
</comment>
<comment type="domain">
    <text evidence="12">The L/FRRG motif is essential for the cytoplasm to vacuole transport (Cvt) pathway, for the recruitment of ATG8 and ATG16 to the PAS in nutrient-rich medium, and for its recruitment to and dissociation from the PAS under starvation conditions.</text>
</comment>
<comment type="domain">
    <text evidence="26">The 7AB loop (residues 433-460) is important for interaction with Atg2 and required for autophagy.</text>
</comment>
<comment type="miscellaneous">
    <text evidence="7">Present with 1560 molecules/cell in log phase SD medium.</text>
</comment>
<comment type="similarity">
    <text evidence="33">Belongs to the WD repeat PROPPIN family.</text>
</comment>
<organism>
    <name type="scientific">Saccharomyces cerevisiae (strain ATCC 204508 / S288c)</name>
    <name type="common">Baker's yeast</name>
    <dbReference type="NCBI Taxonomy" id="559292"/>
    <lineage>
        <taxon>Eukaryota</taxon>
        <taxon>Fungi</taxon>
        <taxon>Dikarya</taxon>
        <taxon>Ascomycota</taxon>
        <taxon>Saccharomycotina</taxon>
        <taxon>Saccharomycetes</taxon>
        <taxon>Saccharomycetales</taxon>
        <taxon>Saccharomycetaceae</taxon>
        <taxon>Saccharomyces</taxon>
    </lineage>
</organism>
<dbReference type="EMBL" id="D50617">
    <property type="protein sequence ID" value="BAA09260.1"/>
    <property type="molecule type" value="Genomic_DNA"/>
</dbReference>
<dbReference type="EMBL" id="BK006940">
    <property type="protein sequence ID" value="DAA12461.1"/>
    <property type="molecule type" value="Genomic_DNA"/>
</dbReference>
<dbReference type="PIR" id="S56276">
    <property type="entry name" value="S56276"/>
</dbReference>
<dbReference type="RefSeq" id="NP_444297.1">
    <property type="nucleotide sequence ID" value="NM_001179986.1"/>
</dbReference>
<dbReference type="PDB" id="6KYB">
    <property type="method" value="X-ray"/>
    <property type="resolution" value="2.80 A"/>
    <property type="chains" value="A/B/C/D=1-500"/>
</dbReference>
<dbReference type="PDB" id="8AFQ">
    <property type="method" value="EM"/>
    <property type="resolution" value="3.30 A"/>
    <property type="chains" value="A/C/D/E=1-500"/>
</dbReference>
<dbReference type="PDB" id="8AFW">
    <property type="method" value="EM"/>
    <property type="resolution" value="3.80 A"/>
    <property type="chains" value="A/B/C/D=1-500"/>
</dbReference>
<dbReference type="PDB" id="8AFX">
    <property type="method" value="EM"/>
    <property type="resolution" value="4.80 A"/>
    <property type="chains" value="A=5-499"/>
</dbReference>
<dbReference type="PDB" id="8AFY">
    <property type="method" value="EM"/>
    <property type="resolution" value="26.00 A"/>
    <property type="chains" value="A/B/C/D/E/F/G/H=1-500"/>
</dbReference>
<dbReference type="PDBsum" id="6KYB"/>
<dbReference type="PDBsum" id="8AFQ"/>
<dbReference type="PDBsum" id="8AFW"/>
<dbReference type="PDBsum" id="8AFX"/>
<dbReference type="PDBsum" id="8AFY"/>
<dbReference type="EMDB" id="EMD-15408"/>
<dbReference type="EMDB" id="EMD-15410"/>
<dbReference type="EMDB" id="EMD-15411"/>
<dbReference type="EMDB" id="EMD-15412"/>
<dbReference type="SMR" id="P43601"/>
<dbReference type="BioGRID" id="31174">
    <property type="interactions" value="206"/>
</dbReference>
<dbReference type="ComplexPortal" id="CPX-3088">
    <property type="entry name" value="PAS complex"/>
</dbReference>
<dbReference type="ComplexPortal" id="CPX-361">
    <property type="entry name" value="ATG2-ATG18 complex"/>
</dbReference>
<dbReference type="DIP" id="DIP-5185N"/>
<dbReference type="FunCoup" id="P43601">
    <property type="interactions" value="674"/>
</dbReference>
<dbReference type="IntAct" id="P43601">
    <property type="interactions" value="29"/>
</dbReference>
<dbReference type="MINT" id="P43601"/>
<dbReference type="STRING" id="4932.YFR021W"/>
<dbReference type="TCDB" id="9.A.15.1.1">
    <property type="family name" value="the autophagy-related phagophore-formation transporter (apt) family"/>
</dbReference>
<dbReference type="iPTMnet" id="P43601"/>
<dbReference type="PaxDb" id="4932-YFR021W"/>
<dbReference type="PeptideAtlas" id="P43601"/>
<dbReference type="EnsemblFungi" id="YFR021W_mRNA">
    <property type="protein sequence ID" value="YFR021W"/>
    <property type="gene ID" value="YFR021W"/>
</dbReference>
<dbReference type="GeneID" id="850577"/>
<dbReference type="KEGG" id="sce:YFR021W"/>
<dbReference type="AGR" id="SGD:S000001917"/>
<dbReference type="SGD" id="S000001917">
    <property type="gene designation" value="ATG18"/>
</dbReference>
<dbReference type="VEuPathDB" id="FungiDB:YFR021W"/>
<dbReference type="eggNOG" id="KOG2110">
    <property type="taxonomic scope" value="Eukaryota"/>
</dbReference>
<dbReference type="GeneTree" id="ENSGT00940000167852"/>
<dbReference type="HOGENOM" id="CLU_025895_5_2_1"/>
<dbReference type="InParanoid" id="P43601"/>
<dbReference type="OMA" id="KTMGRMI"/>
<dbReference type="OrthoDB" id="1667587at2759"/>
<dbReference type="BioCyc" id="YEAST:G3O-30472-MONOMER"/>
<dbReference type="Reactome" id="R-SCE-1632852">
    <property type="pathway name" value="Macroautophagy"/>
</dbReference>
<dbReference type="BioGRID-ORCS" id="850577">
    <property type="hits" value="0 hits in 10 CRISPR screens"/>
</dbReference>
<dbReference type="PRO" id="PR:P43601"/>
<dbReference type="Proteomes" id="UP000002311">
    <property type="component" value="Chromosome VI"/>
</dbReference>
<dbReference type="RNAct" id="P43601">
    <property type="molecule type" value="protein"/>
</dbReference>
<dbReference type="GO" id="GO:0071944">
    <property type="term" value="C:cell periphery"/>
    <property type="evidence" value="ECO:0007005"/>
    <property type="project" value="SGD"/>
</dbReference>
<dbReference type="GO" id="GO:0005829">
    <property type="term" value="C:cytosol"/>
    <property type="evidence" value="ECO:0000314"/>
    <property type="project" value="SGD"/>
</dbReference>
<dbReference type="GO" id="GO:0005768">
    <property type="term" value="C:endosome"/>
    <property type="evidence" value="ECO:0000314"/>
    <property type="project" value="SGD"/>
</dbReference>
<dbReference type="GO" id="GO:0010008">
    <property type="term" value="C:endosome membrane"/>
    <property type="evidence" value="ECO:0007669"/>
    <property type="project" value="UniProtKB-SubCell"/>
</dbReference>
<dbReference type="GO" id="GO:0000329">
    <property type="term" value="C:fungal-type vacuole membrane"/>
    <property type="evidence" value="ECO:0000314"/>
    <property type="project" value="SGD"/>
</dbReference>
<dbReference type="GO" id="GO:0070772">
    <property type="term" value="C:PAS complex"/>
    <property type="evidence" value="ECO:0000314"/>
    <property type="project" value="SGD"/>
</dbReference>
<dbReference type="GO" id="GO:0061908">
    <property type="term" value="C:phagophore"/>
    <property type="evidence" value="ECO:0000314"/>
    <property type="project" value="SGD"/>
</dbReference>
<dbReference type="GO" id="GO:0000407">
    <property type="term" value="C:phagophore assembly site"/>
    <property type="evidence" value="ECO:0000314"/>
    <property type="project" value="SGD"/>
</dbReference>
<dbReference type="GO" id="GO:0034045">
    <property type="term" value="C:phagophore assembly site membrane"/>
    <property type="evidence" value="ECO:0000314"/>
    <property type="project" value="ComplexPortal"/>
</dbReference>
<dbReference type="GO" id="GO:0032991">
    <property type="term" value="C:protein-containing complex"/>
    <property type="evidence" value="ECO:0000314"/>
    <property type="project" value="ComplexPortal"/>
</dbReference>
<dbReference type="GO" id="GO:0005774">
    <property type="term" value="C:vacuolar membrane"/>
    <property type="evidence" value="ECO:0000314"/>
    <property type="project" value="UniProtKB"/>
</dbReference>
<dbReference type="GO" id="GO:0080025">
    <property type="term" value="F:phosphatidylinositol-3,5-bisphosphate binding"/>
    <property type="evidence" value="ECO:0000314"/>
    <property type="project" value="SGD"/>
</dbReference>
<dbReference type="GO" id="GO:0032266">
    <property type="term" value="F:phosphatidylinositol-3-phosphate binding"/>
    <property type="evidence" value="ECO:0000314"/>
    <property type="project" value="SGD"/>
</dbReference>
<dbReference type="GO" id="GO:0070273">
    <property type="term" value="F:phosphatidylinositol-4-phosphate binding"/>
    <property type="evidence" value="ECO:0000314"/>
    <property type="project" value="SGD"/>
</dbReference>
<dbReference type="GO" id="GO:0030674">
    <property type="term" value="F:protein-macromolecule adaptor activity"/>
    <property type="evidence" value="ECO:0000318"/>
    <property type="project" value="GO_Central"/>
</dbReference>
<dbReference type="GO" id="GO:0043130">
    <property type="term" value="F:ubiquitin binding"/>
    <property type="evidence" value="ECO:0000314"/>
    <property type="project" value="SGD"/>
</dbReference>
<dbReference type="GO" id="GO:1903100">
    <property type="term" value="P:1-phosphatidyl-1D-myo-inositol 3,5-bisphosphate metabolic process"/>
    <property type="evidence" value="ECO:0000303"/>
    <property type="project" value="ComplexPortal"/>
</dbReference>
<dbReference type="GO" id="GO:0000045">
    <property type="term" value="P:autophagosome assembly"/>
    <property type="evidence" value="ECO:0000303"/>
    <property type="project" value="ComplexPortal"/>
</dbReference>
<dbReference type="GO" id="GO:0000422">
    <property type="term" value="P:autophagy of mitochondrion"/>
    <property type="evidence" value="ECO:0000318"/>
    <property type="project" value="GO_Central"/>
</dbReference>
<dbReference type="GO" id="GO:0032258">
    <property type="term" value="P:cytoplasm to vacuole targeting by the Cvt pathway"/>
    <property type="evidence" value="ECO:0000314"/>
    <property type="project" value="SGD"/>
</dbReference>
<dbReference type="GO" id="GO:0061723">
    <property type="term" value="P:glycophagy"/>
    <property type="evidence" value="ECO:0000318"/>
    <property type="project" value="GO_Central"/>
</dbReference>
<dbReference type="GO" id="GO:0045324">
    <property type="term" value="P:late endosome to vacuole transport"/>
    <property type="evidence" value="ECO:0000315"/>
    <property type="project" value="SGD"/>
</dbReference>
<dbReference type="GO" id="GO:0016236">
    <property type="term" value="P:macroautophagy"/>
    <property type="evidence" value="ECO:0000314"/>
    <property type="project" value="SGD"/>
</dbReference>
<dbReference type="GO" id="GO:0044804">
    <property type="term" value="P:nucleophagy"/>
    <property type="evidence" value="ECO:0000315"/>
    <property type="project" value="SGD"/>
</dbReference>
<dbReference type="GO" id="GO:0000425">
    <property type="term" value="P:pexophagy"/>
    <property type="evidence" value="ECO:0000315"/>
    <property type="project" value="SGD"/>
</dbReference>
<dbReference type="GO" id="GO:0034727">
    <property type="term" value="P:piecemeal microautophagy of the nucleus"/>
    <property type="evidence" value="ECO:0000315"/>
    <property type="project" value="SGD"/>
</dbReference>
<dbReference type="GO" id="GO:0044090">
    <property type="term" value="P:positive regulation of vacuole organization"/>
    <property type="evidence" value="ECO:0000315"/>
    <property type="project" value="SGD"/>
</dbReference>
<dbReference type="GO" id="GO:0034497">
    <property type="term" value="P:protein localization to phagophore assembly site"/>
    <property type="evidence" value="ECO:0000318"/>
    <property type="project" value="GO_Central"/>
</dbReference>
<dbReference type="GO" id="GO:0010511">
    <property type="term" value="P:regulation of phosphatidylinositol biosynthetic process"/>
    <property type="evidence" value="ECO:0000303"/>
    <property type="project" value="ComplexPortal"/>
</dbReference>
<dbReference type="GO" id="GO:0006624">
    <property type="term" value="P:vacuolar protein processing"/>
    <property type="evidence" value="ECO:0000314"/>
    <property type="project" value="SGD"/>
</dbReference>
<dbReference type="FunFam" id="2.130.10.10:FF:001026">
    <property type="entry name" value="Atg18p"/>
    <property type="match status" value="1"/>
</dbReference>
<dbReference type="Gene3D" id="2.130.10.10">
    <property type="entry name" value="YVTN repeat-like/Quinoprotein amine dehydrogenase"/>
    <property type="match status" value="1"/>
</dbReference>
<dbReference type="InterPro" id="IPR048720">
    <property type="entry name" value="PROPPIN"/>
</dbReference>
<dbReference type="InterPro" id="IPR015943">
    <property type="entry name" value="WD40/YVTN_repeat-like_dom_sf"/>
</dbReference>
<dbReference type="InterPro" id="IPR036322">
    <property type="entry name" value="WD40_repeat_dom_sf"/>
</dbReference>
<dbReference type="InterPro" id="IPR001680">
    <property type="entry name" value="WD40_rpt"/>
</dbReference>
<dbReference type="PANTHER" id="PTHR11227">
    <property type="entry name" value="WD-REPEAT PROTEIN INTERACTING WITH PHOSPHOINOSIDES WIPI -RELATED"/>
    <property type="match status" value="1"/>
</dbReference>
<dbReference type="Pfam" id="PF21032">
    <property type="entry name" value="PROPPIN"/>
    <property type="match status" value="2"/>
</dbReference>
<dbReference type="SMART" id="SM00320">
    <property type="entry name" value="WD40"/>
    <property type="match status" value="2"/>
</dbReference>
<dbReference type="SUPFAM" id="SSF50978">
    <property type="entry name" value="WD40 repeat-like"/>
    <property type="match status" value="1"/>
</dbReference>
<keyword id="KW-0002">3D-structure</keyword>
<keyword id="KW-0072">Autophagy</keyword>
<keyword id="KW-0967">Endosome</keyword>
<keyword id="KW-0472">Membrane</keyword>
<keyword id="KW-0597">Phosphoprotein</keyword>
<keyword id="KW-0653">Protein transport</keyword>
<keyword id="KW-1185">Reference proteome</keyword>
<keyword id="KW-0677">Repeat</keyword>
<keyword id="KW-0813">Transport</keyword>
<keyword id="KW-0926">Vacuole</keyword>
<keyword id="KW-0853">WD repeat</keyword>
<sequence>MSDSSPTINFINFNQTGTCISLGTSKGFKIFNCEPFGKFYSEDSGGYAIVEMLFSTSLLALVGIGDQPALSPRRLRIINTKKHSIICEVTFPTSILSVKMNKSRLVVLLQEQIYIYDINTMRLLHTIETNPNPRGLMAMSPSVANSYLVYPSPPKVINSEIKAHATTNNITLSVGGNTETSFKRDQQDAGHSDISDLDQYSSFTKRDDADPTSSNGGNSSIIKNGDVIVFNLETLQPTMVIEAHKGEIAAMAISFDGTLMATASDKGTIIRVFDIETGDKIYQFRRGTYATRIYSISFSEDSQYLAVTGSSKTVHIFKLGHSMSNNKLDSDDSNMEEAAADDSSLDTTSIDALSDEENPTRLAREPYVDASRKTMGRMIRYSSQKLSRRAARTLGQIFPIKVTSLLESSRHFASLKLPVETNSHVMTISSIGSPIDIDTSEYPELFETGNSASTESYHEPVMKMVPIRVVSSDGYLYNFVMDPERGGDCLILSQYSILMD</sequence>
<proteinExistence type="evidence at protein level"/>
<reference key="1">
    <citation type="journal article" date="1995" name="Nat. Genet.">
        <title>Analysis of the nucleotide sequence of chromosome VI from Saccharomyces cerevisiae.</title>
        <authorList>
            <person name="Murakami Y."/>
            <person name="Naitou M."/>
            <person name="Hagiwara H."/>
            <person name="Shibata T."/>
            <person name="Ozawa M."/>
            <person name="Sasanuma S."/>
            <person name="Sasanuma M."/>
            <person name="Tsuchiya Y."/>
            <person name="Soeda E."/>
            <person name="Yokoyama K."/>
            <person name="Yamazaki M."/>
            <person name="Tashiro H."/>
            <person name="Eki T."/>
        </authorList>
    </citation>
    <scope>NUCLEOTIDE SEQUENCE [LARGE SCALE GENOMIC DNA]</scope>
    <source>
        <strain>ATCC 204508 / S288c</strain>
    </source>
</reference>
<reference key="2">
    <citation type="journal article" date="2014" name="G3 (Bethesda)">
        <title>The reference genome sequence of Saccharomyces cerevisiae: Then and now.</title>
        <authorList>
            <person name="Engel S.R."/>
            <person name="Dietrich F.S."/>
            <person name="Fisk D.G."/>
            <person name="Binkley G."/>
            <person name="Balakrishnan R."/>
            <person name="Costanzo M.C."/>
            <person name="Dwight S.S."/>
            <person name="Hitz B.C."/>
            <person name="Karra K."/>
            <person name="Nash R.S."/>
            <person name="Weng S."/>
            <person name="Wong E.D."/>
            <person name="Lloyd P."/>
            <person name="Skrzypek M.S."/>
            <person name="Miyasato S.R."/>
            <person name="Simison M."/>
            <person name="Cherry J.M."/>
        </authorList>
    </citation>
    <scope>GENOME REANNOTATION</scope>
    <source>
        <strain>ATCC 204508 / S288c</strain>
    </source>
</reference>
<reference key="3">
    <citation type="journal article" date="2001" name="Curr. Biol.">
        <title>A screen for genes required for meiosis and spore formation based on whole-genome expression.</title>
        <authorList>
            <person name="Rabitsch K.P."/>
            <person name="Toth A."/>
            <person name="Galova M."/>
            <person name="Schleiffer A."/>
            <person name="Schaffner G."/>
            <person name="Aigner E."/>
            <person name="Rupp C."/>
            <person name="Penkner A.M."/>
            <person name="Moreno-Borchart A.C."/>
            <person name="Primig M."/>
            <person name="Esposito R.E."/>
            <person name="Klein F."/>
            <person name="Knop M."/>
            <person name="Nasmyth K."/>
        </authorList>
    </citation>
    <scope>FUNCTION</scope>
</reference>
<reference key="4">
    <citation type="journal article" date="2001" name="FEBS Lett.">
        <title>Autophagy and the cytoplasm to vacuole targeting pathway both require Aut10p.</title>
        <authorList>
            <person name="Barth H."/>
            <person name="Meiling-Wesse K."/>
            <person name="Epple U.D."/>
            <person name="Thumm M."/>
        </authorList>
    </citation>
    <scope>FUNCTION</scope>
</reference>
<reference key="5">
    <citation type="journal article" date="2001" name="Mol. Biol. Cell">
        <title>Cvt18/Gsa12 is required for cytoplasm-to-vacuole transport, pexophagy, and autophagy in Saccharomyces cerevisiae and Pichia pastoris.</title>
        <authorList>
            <person name="Guan J."/>
            <person name="Stromhaug P.E."/>
            <person name="George M.D."/>
            <person name="Habibzadegah-Tari P."/>
            <person name="Bevan A."/>
            <person name="Dunn W.A. Jr."/>
            <person name="Klionsky D.J."/>
        </authorList>
    </citation>
    <scope>FUNCTION</scope>
</reference>
<reference key="6">
    <citation type="journal article" date="2001" name="Yeast">
        <title>Functional analysis of the Saccharomyces cerevisiae YFR021w/YGR223c/YPL100w ORF family suggests relations to mitochondrial/peroxisomal functions and amino acid signalling pathways.</title>
        <authorList>
            <person name="Georgakopoulos T."/>
            <person name="Koutroubas G."/>
            <person name="Vakonakis I."/>
            <person name="Tzermia M."/>
            <person name="Prokova V."/>
            <person name="Voutsina A."/>
            <person name="Alexandraki D."/>
        </authorList>
    </citation>
    <scope>FUNCTION</scope>
</reference>
<reference key="7">
    <citation type="journal article" date="2003" name="Dev. Cell">
        <title>A unified nomenclature for yeast autophagy-related genes.</title>
        <authorList>
            <person name="Klionsky D.J."/>
            <person name="Cregg J.M."/>
            <person name="Dunn W.A. Jr."/>
            <person name="Emr S.D."/>
            <person name="Sakai Y."/>
            <person name="Sandoval I.V."/>
            <person name="Sibirny A."/>
            <person name="Subramani S."/>
            <person name="Thumm M."/>
            <person name="Veenhuis M."/>
            <person name="Ohsumi Y."/>
        </authorList>
    </citation>
    <scope>NOMENCLATURE</scope>
</reference>
<reference key="8">
    <citation type="journal article" date="2003" name="Nature">
        <title>Global analysis of protein expression in yeast.</title>
        <authorList>
            <person name="Ghaemmaghami S."/>
            <person name="Huh W.-K."/>
            <person name="Bower K."/>
            <person name="Howson R.W."/>
            <person name="Belle A."/>
            <person name="Dephoure N."/>
            <person name="O'Shea E.K."/>
            <person name="Weissman J.S."/>
        </authorList>
    </citation>
    <scope>LEVEL OF PROTEIN EXPRESSION [LARGE SCALE ANALYSIS]</scope>
</reference>
<reference key="9">
    <citation type="journal article" date="2004" name="Dev. Cell">
        <title>The Atg1-Atg13 complex regulates Atg9 and Atg23 retrieval transport from the pre-autophagosomal structure.</title>
        <authorList>
            <person name="Reggiori F."/>
            <person name="Tucker K.A."/>
            <person name="Stromhaug P.E."/>
            <person name="Klionsky D.J."/>
        </authorList>
    </citation>
    <scope>FUNCTION</scope>
    <scope>SUBCELLULAR LOCATION</scope>
    <scope>INTERACTION WITH ATG9</scope>
</reference>
<reference key="10">
    <citation type="journal article" date="2004" name="EMBO J.">
        <title>Svp1p defines a family of phosphatidylinositol 3,5-bisphosphate effectors.</title>
        <authorList>
            <person name="Dove S.K."/>
            <person name="Piper R.C."/>
            <person name="McEwen R.K."/>
            <person name="Yu J.W."/>
            <person name="King M.C."/>
            <person name="Hughes D.C."/>
            <person name="Thuring J."/>
            <person name="Holmes A.B."/>
            <person name="Cooke F.T."/>
            <person name="Michell R.H."/>
            <person name="Parker P.J."/>
            <person name="Lemmon M.A."/>
        </authorList>
    </citation>
    <scope>INTERACTION WITH PIP2</scope>
    <scope>SUBCELLULAR LOCATION</scope>
    <scope>MUTAGENESIS OF 73-ARG--ARG-76 AND 285-ARG-ARG-286</scope>
</reference>
<reference key="11">
    <citation type="journal article" date="2004" name="J. Biol. Chem.">
        <title>Atg21 is required for effective recruitment of Atg8 to the preautophagosomal structure during the Cvt pathway.</title>
        <authorList>
            <person name="Meiling-Wesse K."/>
            <person name="Barth H."/>
            <person name="Voss C."/>
            <person name="Eskelinen E.-L."/>
            <person name="Epple U.D."/>
            <person name="Thumm M."/>
        </authorList>
    </citation>
    <scope>FUNCTION</scope>
</reference>
<reference key="12">
    <citation type="journal article" date="2004" name="Mol. Biol. Cell">
        <title>Atg21 is a phosphoinositide binding protein required for efficient lipidation and localization of Atg8 during uptake of aminopeptidase I by selective autophagy.</title>
        <authorList>
            <person name="Stromhaug P.E."/>
            <person name="Reggiori F."/>
            <person name="Guan J."/>
            <person name="Wang C.-W."/>
            <person name="Klionsky D.J."/>
        </authorList>
    </citation>
    <scope>FUNCTION</scope>
    <scope>SUBCELLULAR LOCATION</scope>
    <scope>INTERACTION WITH PIP2</scope>
</reference>
<reference key="13">
    <citation type="journal article" date="2006" name="FEBS Lett.">
        <title>The relevance of the phosphatidylinositolphosphat-binding motif FRRGT of Atg18 and Atg21 for the Cvt pathway and autophagy.</title>
        <authorList>
            <person name="Krick R."/>
            <person name="Tolstrup J."/>
            <person name="Appelles A."/>
            <person name="Henke S."/>
            <person name="Thumm M."/>
        </authorList>
    </citation>
    <scope>FUNCTION</scope>
    <scope>SUBCELLULAR LOCATION</scope>
    <scope>DOMAIN</scope>
</reference>
<reference key="14">
    <citation type="journal article" date="2007" name="Mol. Biol. Cell">
        <title>Atg18 regulates organelle morphology and Fab1 kinase activity independent of its membrane recruitment by phosphatidylinositol 3,5-bisphosphate.</title>
        <authorList>
            <person name="Efe J.A."/>
            <person name="Botelho R.J."/>
            <person name="Emr S.D."/>
        </authorList>
    </citation>
    <scope>FUNCTION</scope>
    <scope>SUBCELLULAR LOCATION</scope>
    <scope>INTERACTION WITH VAC17</scope>
    <scope>MUTAGENESIS OF 285-ARG--ARG-286</scope>
</reference>
<reference key="15">
    <citation type="journal article" date="2008" name="Autophagy">
        <title>Localization of autophagy-related proteins in yeast using a versatile plasmid-based resource of fluorescent protein fusions.</title>
        <authorList>
            <person name="Ma J."/>
            <person name="Bharucha N."/>
            <person name="Dobry C.J."/>
            <person name="Frisch R.L."/>
            <person name="Lawson S."/>
            <person name="Kumar A."/>
        </authorList>
    </citation>
    <scope>SUBCELLULAR LOCATION</scope>
</reference>
<reference key="16">
    <citation type="journal article" date="2008" name="Autophagy">
        <title>Dissecting the localization and function of Atg18, Atg21 and Ygr223c.</title>
        <authorList>
            <person name="Krick R."/>
            <person name="Henke S."/>
            <person name="Tolstrup J."/>
            <person name="Thumm M."/>
        </authorList>
    </citation>
    <scope>SUBCELLULAR LOCATION</scope>
    <scope>FUNCTION</scope>
</reference>
<reference key="17">
    <citation type="journal article" date="2008" name="EMBO J.">
        <title>VAC14 nucleates a protein complex essential for the acute interconversion of PI3P and PI(3,5)P(2) in yeast and mouse.</title>
        <authorList>
            <person name="Jin N."/>
            <person name="Chow C.Y."/>
            <person name="Liu L."/>
            <person name="Zolov S.N."/>
            <person name="Bronson R."/>
            <person name="Davisson M."/>
            <person name="Petersen J.L."/>
            <person name="Zhang Y."/>
            <person name="Park S."/>
            <person name="Duex J.E."/>
            <person name="Goldowitz D."/>
            <person name="Meisler M.H."/>
            <person name="Weisman L.S."/>
        </authorList>
    </citation>
    <scope>IDENTIFICATION IN THE PI(3,5)P2 REGULATORY COMPLEX</scope>
    <scope>FUNCTION</scope>
    <scope>SUBCELLULAR LOCATION</scope>
</reference>
<reference key="18">
    <citation type="journal article" date="2008" name="J. Biol. Chem.">
        <title>The Atg18-Atg2 complex is recruited to autophagic membranes via phosphatidylinositol 3-phosphate and exerts an essential function.</title>
        <authorList>
            <person name="Obara K."/>
            <person name="Sekito T."/>
            <person name="Niimi K."/>
            <person name="Ohsumi Y."/>
        </authorList>
    </citation>
    <scope>FUNCTION</scope>
    <scope>INTERACTION WITH ATG2</scope>
    <scope>PI3P-BINDING</scope>
    <scope>SUBCELLULAR LOCATION</scope>
</reference>
<reference key="19">
    <citation type="journal article" date="2008" name="Mol. Biol. Cell">
        <title>Self-interaction is critical for Atg9 transport and function at the phagophore assembly site during autophagy.</title>
        <authorList>
            <person name="He C."/>
            <person name="Baba M."/>
            <person name="Cao Y."/>
            <person name="Klionsky D.J."/>
        </authorList>
    </citation>
    <scope>INTERACTION WITH ATG9</scope>
    <scope>SUBCELLULAR LOCATION</scope>
</reference>
<reference key="20">
    <citation type="journal article" date="2008" name="Mol. Cell. Proteomics">
        <title>A multidimensional chromatography technology for in-depth phosphoproteome analysis.</title>
        <authorList>
            <person name="Albuquerque C.P."/>
            <person name="Smolka M.B."/>
            <person name="Payne S.H."/>
            <person name="Bafna V."/>
            <person name="Eng J."/>
            <person name="Zhou H."/>
        </authorList>
    </citation>
    <scope>PHOSPHORYLATION [LARGE SCALE ANALYSIS] AT SER-354</scope>
    <scope>IDENTIFICATION BY MASS SPECTROMETRY [LARGE SCALE ANALYSIS]</scope>
</reference>
<reference key="21">
    <citation type="journal article" date="2010" name="J. Biol. Chem.">
        <title>Roles of the lipid-binding motifs of Atg18 and Atg21 in the cytoplasm to vacuole targeting pathway and autophagy.</title>
        <authorList>
            <person name="Nair U."/>
            <person name="Cao Y."/>
            <person name="Xie Z."/>
            <person name="Klionsky D.J."/>
        </authorList>
    </citation>
    <scope>FUNCTION</scope>
    <scope>DOMAIN</scope>
</reference>
<reference key="22">
    <citation type="journal article" date="2011" name="Autophagy">
        <title>GFP-Atg8 protease protection as a tool to monitor autophagosome biogenesis.</title>
        <authorList>
            <person name="Nair U."/>
            <person name="Thumm M."/>
            <person name="Klionsky D.J."/>
            <person name="Krick R."/>
        </authorList>
    </citation>
    <scope>FUNCTION</scope>
</reference>
<reference key="23">
    <citation type="journal article" date="2011" name="Genes Dev.">
        <title>Phosphoinositide [PI(3,5)P2] lipid-dependent regulation of the general transcriptional regulator Tup1.</title>
        <authorList>
            <person name="Han B.K."/>
            <person name="Emr S.D."/>
        </authorList>
    </citation>
    <scope>PIP2-BINDING</scope>
</reference>
<reference key="24">
    <citation type="journal article" date="2012" name="Autophagy">
        <title>KCS1 deletion in Saccharomyces cerevisiae leads to a defect in translocation of autophagic proteins and reduces autophagosome formation.</title>
        <authorList>
            <person name="Taylor R. Jr."/>
            <person name="Chen P.H."/>
            <person name="Chou C.C."/>
            <person name="Patel J."/>
            <person name="Jin S.V."/>
        </authorList>
    </citation>
    <scope>SUBCELLULAR LOCATION</scope>
</reference>
<reference key="25">
    <citation type="journal article" date="2012" name="FEBS Lett.">
        <title>Autophagosome formation can be achieved in the absence of Atg18 by expressing engineered PAS-targeted Atg2.</title>
        <authorList>
            <person name="Kobayashi T."/>
            <person name="Suzuki K."/>
            <person name="Ohsumi Y."/>
        </authorList>
    </citation>
    <scope>FUNCTION OF THE ATG2-ATG8 COMPLEX</scope>
    <scope>SUBUNIT</scope>
</reference>
<reference key="26">
    <citation type="journal article" date="2012" name="Mol. Cell">
        <title>Two-site recognition of phosphatidylinositol 3-phosphate by PROPPINs in autophagy.</title>
        <authorList>
            <person name="Baskaran S."/>
            <person name="Ragusa M.J."/>
            <person name="Boura E."/>
            <person name="Hurley J.H."/>
        </authorList>
    </citation>
    <scope>SUBCELLULAR LOCATION</scope>
</reference>
<reference key="27">
    <citation type="journal article" date="2012" name="Mol. Biol. Cell">
        <title>Yeast vacuoles fragment in an asymmetrical two-phase process with distinct protein requirements.</title>
        <authorList>
            <person name="Zieger M."/>
            <person name="Mayer A."/>
        </authorList>
    </citation>
    <scope>FUNCTION</scope>
</reference>
<reference key="28">
    <citation type="journal article" date="2012" name="Proc. Natl. Acad. Sci. U.S.A.">
        <title>Structural and functional characterization of the two phosphoinositide binding sites of PROPPINs, a beta-propeller protein family.</title>
        <authorList>
            <person name="Krick R."/>
            <person name="Busse R.A."/>
            <person name="Scacioc A."/>
            <person name="Stephan M."/>
            <person name="Janshoff A."/>
            <person name="Thumm M."/>
            <person name="Kuhnel K."/>
        </authorList>
    </citation>
    <scope>SUBCELLULAR LOCATION</scope>
    <scope>MUTAGENESIS OF SER-264; THR-268; ARG-271; ARG-285; ARG-286; SER-311; THR-313 AND HIS-315</scope>
</reference>
<reference key="29">
    <citation type="journal article" date="2014" name="Autophagy">
        <title>Atg1 kinase organizes autophagosome formation by phosphorylating Atg9.</title>
        <authorList>
            <person name="Papinski D."/>
            <person name="Kraft C."/>
        </authorList>
    </citation>
    <scope>FUNCTION</scope>
    <scope>INTERACTION WITH ATG9</scope>
</reference>
<reference key="30">
    <citation type="journal article" date="2014" name="Mol. Cell">
        <title>Early steps in autophagy depend on direct phosphorylation of Atg9 by the Atg1 kinase.</title>
        <authorList>
            <person name="Papinski D."/>
            <person name="Schuschnig M."/>
            <person name="Reiter W."/>
            <person name="Wilhelm L."/>
            <person name="Barnes C.A."/>
            <person name="Maiolica A."/>
            <person name="Hansmann I."/>
            <person name="Pfaffenwimmer T."/>
            <person name="Kijanska M."/>
            <person name="Stoffel I."/>
            <person name="Lee S.S."/>
            <person name="Brezovich A."/>
            <person name="Lou J.H."/>
            <person name="Turk B.E."/>
            <person name="Aebersold R."/>
            <person name="Ammerer G."/>
            <person name="Peter M."/>
            <person name="Kraft C."/>
        </authorList>
    </citation>
    <scope>INTERACTION WITH ATG9</scope>
</reference>
<reference evidence="35" key="31">
    <citation type="journal article" date="2021" name="Cell. Mol. Life Sci.">
        <title>The crystal structure of Atg18 reveals a new binding site for Atg2 in Saccharomyces cerevisiae.</title>
        <authorList>
            <person name="Lei Y."/>
            <person name="Tang D."/>
            <person name="Liao G."/>
            <person name="Xu L."/>
            <person name="Liu S."/>
            <person name="Chen Q."/>
            <person name="Li C."/>
            <person name="Duan J."/>
            <person name="Wang K."/>
            <person name="Wang J."/>
            <person name="Sun B."/>
            <person name="Li Z."/>
            <person name="Dai L."/>
            <person name="Cheng W."/>
            <person name="Qi S."/>
            <person name="Lu K."/>
        </authorList>
    </citation>
    <scope>X-RAY CRYSTALLOGRAPHY (2.80 ANGSTROMS)</scope>
    <scope>DOMAIN</scope>
    <scope>INTERACTION WITH ATG2</scope>
</reference>
<gene>
    <name evidence="30" type="primary">ATG18</name>
    <name evidence="28" type="synonym">AUT10</name>
    <name evidence="29" type="synonym">CVT18</name>
    <name evidence="27" type="synonym">NMR1</name>
    <name evidence="31" type="synonym">SVP1</name>
    <name evidence="34" type="ordered locus">YFR021W</name>
</gene>
<name>ATG18_YEAST</name>